<comment type="function">
    <text>May be involved in transcriptional regulation of both viral and cellular genes by interacting with the host DNA-binding protein RBPJ.</text>
</comment>
<comment type="subunit">
    <text evidence="3">Interacts (via N-terminus) with host RBPJ.</text>
</comment>
<comment type="interaction">
    <interactant intactId="EBI-9346250">
        <id>P03203</id>
    </interactant>
    <interactant intactId="EBI-632552">
        <id>Q06330</id>
        <label>RBPJ</label>
    </interactant>
    <organismsDiffer>true</organismsDiffer>
    <experiments>4</experiments>
</comment>
<comment type="subcellular location">
    <subcellularLocation>
        <location evidence="2">Host nucleus</location>
    </subcellularLocation>
</comment>
<comment type="similarity">
    <text evidence="4">Belongs to the herpesviridae EBNA-4 family.</text>
</comment>
<accession>P03203</accession>
<accession>Q777E8</accession>
<name>EBNA4_EBVB9</name>
<protein>
    <recommendedName>
        <fullName>Epstein-Barr nuclear antigen 4</fullName>
        <shortName>EBNA-4</shortName>
        <shortName>EBV nuclear antigen 4</shortName>
    </recommendedName>
    <alternativeName>
        <fullName>Epstein-Barr nuclear antigen 3B</fullName>
        <shortName>EBNA-3B</shortName>
        <shortName>EBV nuclear antigen 3B</shortName>
    </alternativeName>
</protein>
<dbReference type="EMBL" id="V01555">
    <property type="protein sequence ID" value="CAA24858.1"/>
    <property type="molecule type" value="Genomic_DNA"/>
</dbReference>
<dbReference type="EMBL" id="AJ507799">
    <property type="protein sequence ID" value="CAD53420.1"/>
    <property type="molecule type" value="Genomic_DNA"/>
</dbReference>
<dbReference type="PIR" id="S33012">
    <property type="entry name" value="QQBE24"/>
</dbReference>
<dbReference type="PDB" id="7X00">
    <property type="method" value="X-ray"/>
    <property type="resolution" value="1.45 A"/>
    <property type="chains" value="C=279-287"/>
</dbReference>
<dbReference type="PDB" id="7X1C">
    <property type="method" value="X-ray"/>
    <property type="resolution" value="1.41 A"/>
    <property type="chains" value="C=279-285"/>
</dbReference>
<dbReference type="PDBsum" id="7X00"/>
<dbReference type="PDBsum" id="7X1C"/>
<dbReference type="SMR" id="P03203"/>
<dbReference type="BioGRID" id="971805">
    <property type="interactions" value="6"/>
</dbReference>
<dbReference type="DIP" id="DIP-573N"/>
<dbReference type="IntAct" id="P03203">
    <property type="interactions" value="8"/>
</dbReference>
<dbReference type="MINT" id="P03203"/>
<dbReference type="Proteomes" id="UP000153037">
    <property type="component" value="Segment"/>
</dbReference>
<dbReference type="GO" id="GO:0042025">
    <property type="term" value="C:host cell nucleus"/>
    <property type="evidence" value="ECO:0007669"/>
    <property type="project" value="UniProtKB-SubCell"/>
</dbReference>
<dbReference type="GO" id="GO:0016032">
    <property type="term" value="P:viral process"/>
    <property type="evidence" value="ECO:0007669"/>
    <property type="project" value="InterPro"/>
</dbReference>
<dbReference type="InterPro" id="IPR007706">
    <property type="entry name" value="EBNA-3/4/6"/>
</dbReference>
<dbReference type="Pfam" id="PF05009">
    <property type="entry name" value="EBV-NA3"/>
    <property type="match status" value="1"/>
</dbReference>
<proteinExistence type="evidence at protein level"/>
<evidence type="ECO:0000256" key="1">
    <source>
        <dbReference type="SAM" id="MobiDB-lite"/>
    </source>
</evidence>
<evidence type="ECO:0000269" key="2">
    <source>
    </source>
</evidence>
<evidence type="ECO:0000269" key="3">
    <source>
    </source>
</evidence>
<evidence type="ECO:0000305" key="4"/>
<reference key="1">
    <citation type="journal article" date="1984" name="Nature">
        <title>DNA sequence and expression of the B95-8 Epstein-Barr virus genome.</title>
        <authorList>
            <person name="Baer R."/>
            <person name="Bankier A.T."/>
            <person name="Biggin M.D."/>
            <person name="Deininger P.L."/>
            <person name="Farrell P.J."/>
            <person name="Gibson T.J."/>
            <person name="Hatfull G."/>
            <person name="Hudson G.S."/>
            <person name="Satchwell S.C."/>
            <person name="Seguin C."/>
            <person name="Tuffnell P.S."/>
            <person name="Barrell B.G."/>
        </authorList>
    </citation>
    <scope>NUCLEOTIDE SEQUENCE [LARGE SCALE GENOMIC DNA]</scope>
</reference>
<reference key="2">
    <citation type="journal article" date="2003" name="Virology">
        <title>Updated Epstein-Barr virus (EBV) DNA sequence and analysis of a promoter for the BART (CST, BARF0) RNAs of EBV.</title>
        <authorList>
            <person name="de Jesus O."/>
            <person name="Smith P.R."/>
            <person name="Spender L.C."/>
            <person name="Elgueta Karstegl C."/>
            <person name="Niller H.H."/>
            <person name="Huang D."/>
            <person name="Farrell P.J."/>
        </authorList>
    </citation>
    <scope>GENOME REANNOTATION</scope>
</reference>
<reference key="3">
    <citation type="journal article" date="1990" name="J. Virol.">
        <title>cDNA cloning and transient expression of the Epstein-Barr virus-determined nuclear antigen EBNA3B in human cells and identification of novel transcripts from its coding region.</title>
        <authorList>
            <person name="Kerdiles B."/>
            <person name="Walls D."/>
            <person name="Triki H."/>
            <person name="Perricaudet M."/>
            <person name="Joab I."/>
        </authorList>
    </citation>
    <scope>CHARACTERIZATION</scope>
</reference>
<reference key="4">
    <citation type="journal article" date="1990" name="Virology">
        <title>Subnuclear localization and phosphorylation of Epstein-Barr virus latent infection nuclear proteins.</title>
        <authorList>
            <person name="Petti L."/>
            <person name="Sample C."/>
            <person name="Kieff E."/>
        </authorList>
    </citation>
    <scope>SUBCELLULAR LOCATION</scope>
</reference>
<reference key="5">
    <citation type="journal article" date="1996" name="J. Virol.">
        <title>The amino-terminal domains of Epstein-Barr virus nuclear proteins 3A, 3B, and 3C interact with RBPJ(kappa).</title>
        <authorList>
            <person name="Robertson E.S."/>
            <person name="Lin J."/>
            <person name="Kieff E."/>
        </authorList>
    </citation>
    <scope>INTERACTION WITH HUMAN RBPJ</scope>
</reference>
<organismHost>
    <name type="scientific">Homo sapiens</name>
    <name type="common">Human</name>
    <dbReference type="NCBI Taxonomy" id="9606"/>
</organismHost>
<feature type="chain" id="PRO_0000116178" description="Epstein-Barr nuclear antigen 4">
    <location>
        <begin position="1"/>
        <end position="938"/>
    </location>
</feature>
<feature type="region of interest" description="Disordered" evidence="1">
    <location>
        <begin position="1"/>
        <end position="92"/>
    </location>
</feature>
<feature type="region of interest" description="Disordered" evidence="1">
    <location>
        <begin position="360"/>
        <end position="389"/>
    </location>
</feature>
<feature type="region of interest" description="Disordered" evidence="1">
    <location>
        <begin position="430"/>
        <end position="470"/>
    </location>
</feature>
<feature type="region of interest" description="Disordered" evidence="1">
    <location>
        <begin position="528"/>
        <end position="628"/>
    </location>
</feature>
<feature type="region of interest" description="Disordered" evidence="1">
    <location>
        <begin position="694"/>
        <end position="752"/>
    </location>
</feature>
<feature type="region of interest" description="Disordered" evidence="1">
    <location>
        <begin position="849"/>
        <end position="870"/>
    </location>
</feature>
<feature type="region of interest" description="Disordered" evidence="1">
    <location>
        <begin position="910"/>
        <end position="938"/>
    </location>
</feature>
<feature type="compositionally biased region" description="Basic and acidic residues" evidence="1">
    <location>
        <begin position="78"/>
        <end position="92"/>
    </location>
</feature>
<feature type="compositionally biased region" description="Acidic residues" evidence="1">
    <location>
        <begin position="360"/>
        <end position="374"/>
    </location>
</feature>
<feature type="compositionally biased region" description="Basic and acidic residues" evidence="1">
    <location>
        <begin position="430"/>
        <end position="440"/>
    </location>
</feature>
<feature type="compositionally biased region" description="Low complexity" evidence="1">
    <location>
        <begin position="575"/>
        <end position="594"/>
    </location>
</feature>
<feature type="compositionally biased region" description="Polar residues" evidence="1">
    <location>
        <begin position="601"/>
        <end position="615"/>
    </location>
</feature>
<feature type="compositionally biased region" description="Pro residues" evidence="1">
    <location>
        <begin position="698"/>
        <end position="750"/>
    </location>
</feature>
<feature type="compositionally biased region" description="Low complexity" evidence="1">
    <location>
        <begin position="927"/>
        <end position="938"/>
    </location>
</feature>
<gene>
    <name type="primary">EBNA4</name>
    <name type="ORF">BERF2A-BERF2B</name>
</gene>
<organism>
    <name type="scientific">Epstein-Barr virus (strain B95-8)</name>
    <name type="common">HHV-4</name>
    <name type="synonym">Human herpesvirus 4</name>
    <dbReference type="NCBI Taxonomy" id="10377"/>
    <lineage>
        <taxon>Viruses</taxon>
        <taxon>Duplodnaviria</taxon>
        <taxon>Heunggongvirae</taxon>
        <taxon>Peploviricota</taxon>
        <taxon>Herviviricetes</taxon>
        <taxon>Herpesvirales</taxon>
        <taxon>Orthoherpesviridae</taxon>
        <taxon>Gammaherpesvirinae</taxon>
        <taxon>Lymphocryptovirus</taxon>
        <taxon>Lymphocryptovirus humangamma4</taxon>
        <taxon>Epstein-Barr virus (strain GD1)</taxon>
    </lineage>
</organism>
<sequence length="938" mass="102860">MKKAWLSRAQQADAGGASGSEDPPDYGDQGNVTQVGSEPISPEIGPFELSAASEDDPQSGPVEENLDAAAREEEEPHEQEHNGGDDPLDVHTRQPRFVDVNPTQAPVIQLVHAVYDSMLQSDLRPLGSLFLEQNLNIEEFIWMCMTVRHRCQAIRKKPLPIVKQRRWKLLSSCRSWRMGYRTHNLKVNSFESGGDNVHPVLVTATLGCDEGTRHATTYSAGIVQIPRISDQNQKIETAFLMARRARSLSAERYTLFFDLVSSGNTLYAIWIGLGTKNRVSFIEFVGWLCKKDHTHIREWFRQCTGRPKAAKPWLRAHPVAIPYDDPLTNEEIDLAYARGQAMNIEAPRLPDDPIIVEDDDESEEIEAESDEEEDKSGMESLKNIPQTLPYNPTVYGRPAVFDRKSDAKSTKKCRAIVTDFSVIKAIEEEHRKKKAARTEQPRATPESQAPTVVLQRPPTQQEPGPVGPLSVQARLEPWQPLPGPQVTAVLLHEESMQGVQVHGSMLDLLEKDDEVMEQRVMATLLPPVPQQPRAGRRGPCVFTGDLGIESDEPASTEPVHDQLLPAPGPDPLEIQPLTSPTTSQLSSSAPSCAQTPWPVVQPSQTPDDPTKQSRPPETAAPRQWPMPLRPIPMRPLRMQPIPFNHPVGPTPHQTPQVEITPYKPTWAQIGHIPYQPTPTGPATMLLRQWAPATMQTPPRAPTPMSPPEVPPVPRQRPRGAPTPTPPPQVPPVPRQRPRGAPTPTPPPQVLPTPMQLALRAPAGQQGPTKQILRQLLTGGVKKGRPSLKLQAALERQAAAGWQPSPGSGTSDKIVQAPIFYPPVLQPIQVMGQGGSPTAMAASAVTQAPTEYTRERRGVGPMPPTDIPPSKRAKIEAYTEPEMPHGGASHSPVVILENVGQGQQQTLECGGTAKQERDMLGLGDIAVSSPSSSETSNDE</sequence>
<keyword id="KW-0002">3D-structure</keyword>
<keyword id="KW-1048">Host nucleus</keyword>
<keyword id="KW-0945">Host-virus interaction</keyword>
<keyword id="KW-1185">Reference proteome</keyword>
<keyword id="KW-0804">Transcription</keyword>
<keyword id="KW-0805">Transcription regulation</keyword>